<reference key="1">
    <citation type="journal article" date="2003" name="Nature">
        <title>Unique physiological and pathogenic features of Leptospira interrogans revealed by whole-genome sequencing.</title>
        <authorList>
            <person name="Ren S.-X."/>
            <person name="Fu G."/>
            <person name="Jiang X.-G."/>
            <person name="Zeng R."/>
            <person name="Miao Y.-G."/>
            <person name="Xu H."/>
            <person name="Zhang Y.-X."/>
            <person name="Xiong H."/>
            <person name="Lu G."/>
            <person name="Lu L.-F."/>
            <person name="Jiang H.-Q."/>
            <person name="Jia J."/>
            <person name="Tu Y.-F."/>
            <person name="Jiang J.-X."/>
            <person name="Gu W.-Y."/>
            <person name="Zhang Y.-Q."/>
            <person name="Cai Z."/>
            <person name="Sheng H.-H."/>
            <person name="Yin H.-F."/>
            <person name="Zhang Y."/>
            <person name="Zhu G.-F."/>
            <person name="Wan M."/>
            <person name="Huang H.-L."/>
            <person name="Qian Z."/>
            <person name="Wang S.-Y."/>
            <person name="Ma W."/>
            <person name="Yao Z.-J."/>
            <person name="Shen Y."/>
            <person name="Qiang B.-Q."/>
            <person name="Xia Q.-C."/>
            <person name="Guo X.-K."/>
            <person name="Danchin A."/>
            <person name="Saint Girons I."/>
            <person name="Somerville R.L."/>
            <person name="Wen Y.-M."/>
            <person name="Shi M.-H."/>
            <person name="Chen Z."/>
            <person name="Xu J.-G."/>
            <person name="Zhao G.-P."/>
        </authorList>
    </citation>
    <scope>NUCLEOTIDE SEQUENCE [LARGE SCALE GENOMIC DNA]</scope>
    <source>
        <strain>56601</strain>
    </source>
</reference>
<comment type="function">
    <text evidence="1">Catalyzes the anti-1,4-elimination of the C-3 phosphate and the C-6 proR hydrogen from 5-enolpyruvylshikimate-3-phosphate (EPSP) to yield chorismate, which is the branch point compound that serves as the starting substrate for the three terminal pathways of aromatic amino acid biosynthesis. This reaction introduces a second double bond into the aromatic ring system.</text>
</comment>
<comment type="catalytic activity">
    <reaction evidence="1">
        <text>5-O-(1-carboxyvinyl)-3-phosphoshikimate = chorismate + phosphate</text>
        <dbReference type="Rhea" id="RHEA:21020"/>
        <dbReference type="ChEBI" id="CHEBI:29748"/>
        <dbReference type="ChEBI" id="CHEBI:43474"/>
        <dbReference type="ChEBI" id="CHEBI:57701"/>
        <dbReference type="EC" id="4.2.3.5"/>
    </reaction>
</comment>
<comment type="cofactor">
    <cofactor evidence="1">
        <name>FMNH2</name>
        <dbReference type="ChEBI" id="CHEBI:57618"/>
    </cofactor>
    <text evidence="1">Reduced FMN (FMNH(2)).</text>
</comment>
<comment type="pathway">
    <text evidence="1">Metabolic intermediate biosynthesis; chorismate biosynthesis; chorismate from D-erythrose 4-phosphate and phosphoenolpyruvate: step 7/7.</text>
</comment>
<comment type="subunit">
    <text evidence="1">Homotetramer.</text>
</comment>
<comment type="similarity">
    <text evidence="1">Belongs to the chorismate synthase family.</text>
</comment>
<organism>
    <name type="scientific">Leptospira interrogans serogroup Icterohaemorrhagiae serovar Lai (strain 56601)</name>
    <dbReference type="NCBI Taxonomy" id="189518"/>
    <lineage>
        <taxon>Bacteria</taxon>
        <taxon>Pseudomonadati</taxon>
        <taxon>Spirochaetota</taxon>
        <taxon>Spirochaetia</taxon>
        <taxon>Leptospirales</taxon>
        <taxon>Leptospiraceae</taxon>
        <taxon>Leptospira</taxon>
    </lineage>
</organism>
<proteinExistence type="inferred from homology"/>
<dbReference type="EC" id="4.2.3.5" evidence="1"/>
<dbReference type="EMBL" id="AE010300">
    <property type="protein sequence ID" value="AAN47356.1"/>
    <property type="molecule type" value="Genomic_DNA"/>
</dbReference>
<dbReference type="RefSeq" id="NP_710338.1">
    <property type="nucleotide sequence ID" value="NC_004342.2"/>
</dbReference>
<dbReference type="RefSeq" id="WP_001141234.1">
    <property type="nucleotide sequence ID" value="NC_004342.2"/>
</dbReference>
<dbReference type="SMR" id="Q8F9N4"/>
<dbReference type="FunCoup" id="Q8F9N4">
    <property type="interactions" value="434"/>
</dbReference>
<dbReference type="STRING" id="189518.LA_0157"/>
<dbReference type="PaxDb" id="189518-LA_0157"/>
<dbReference type="EnsemblBacteria" id="AAN47356">
    <property type="protein sequence ID" value="AAN47356"/>
    <property type="gene ID" value="LA_0157"/>
</dbReference>
<dbReference type="GeneID" id="61143495"/>
<dbReference type="KEGG" id="lil:LA_0157"/>
<dbReference type="PATRIC" id="fig|189518.3.peg.160"/>
<dbReference type="HOGENOM" id="CLU_034547_0_1_12"/>
<dbReference type="InParanoid" id="Q8F9N4"/>
<dbReference type="OrthoDB" id="9771806at2"/>
<dbReference type="UniPathway" id="UPA00053">
    <property type="reaction ID" value="UER00090"/>
</dbReference>
<dbReference type="Proteomes" id="UP000001408">
    <property type="component" value="Chromosome I"/>
</dbReference>
<dbReference type="GO" id="GO:0005829">
    <property type="term" value="C:cytosol"/>
    <property type="evidence" value="ECO:0000318"/>
    <property type="project" value="GO_Central"/>
</dbReference>
<dbReference type="GO" id="GO:0004107">
    <property type="term" value="F:chorismate synthase activity"/>
    <property type="evidence" value="ECO:0000318"/>
    <property type="project" value="GO_Central"/>
</dbReference>
<dbReference type="GO" id="GO:0010181">
    <property type="term" value="F:FMN binding"/>
    <property type="evidence" value="ECO:0000318"/>
    <property type="project" value="GO_Central"/>
</dbReference>
<dbReference type="GO" id="GO:0008652">
    <property type="term" value="P:amino acid biosynthetic process"/>
    <property type="evidence" value="ECO:0007669"/>
    <property type="project" value="UniProtKB-KW"/>
</dbReference>
<dbReference type="GO" id="GO:0009073">
    <property type="term" value="P:aromatic amino acid family biosynthetic process"/>
    <property type="evidence" value="ECO:0000318"/>
    <property type="project" value="GO_Central"/>
</dbReference>
<dbReference type="GO" id="GO:0009423">
    <property type="term" value="P:chorismate biosynthetic process"/>
    <property type="evidence" value="ECO:0000318"/>
    <property type="project" value="GO_Central"/>
</dbReference>
<dbReference type="CDD" id="cd07304">
    <property type="entry name" value="Chorismate_synthase"/>
    <property type="match status" value="1"/>
</dbReference>
<dbReference type="FunFam" id="3.60.150.10:FF:000003">
    <property type="entry name" value="Chorismate synthase"/>
    <property type="match status" value="1"/>
</dbReference>
<dbReference type="Gene3D" id="3.60.150.10">
    <property type="entry name" value="Chorismate synthase AroC"/>
    <property type="match status" value="1"/>
</dbReference>
<dbReference type="HAMAP" id="MF_00300">
    <property type="entry name" value="Chorismate_synth"/>
    <property type="match status" value="1"/>
</dbReference>
<dbReference type="InterPro" id="IPR000453">
    <property type="entry name" value="Chorismate_synth"/>
</dbReference>
<dbReference type="InterPro" id="IPR035904">
    <property type="entry name" value="Chorismate_synth_AroC_sf"/>
</dbReference>
<dbReference type="InterPro" id="IPR020541">
    <property type="entry name" value="Chorismate_synthase_CS"/>
</dbReference>
<dbReference type="NCBIfam" id="TIGR00033">
    <property type="entry name" value="aroC"/>
    <property type="match status" value="1"/>
</dbReference>
<dbReference type="NCBIfam" id="NF003793">
    <property type="entry name" value="PRK05382.1"/>
    <property type="match status" value="1"/>
</dbReference>
<dbReference type="PANTHER" id="PTHR21085">
    <property type="entry name" value="CHORISMATE SYNTHASE"/>
    <property type="match status" value="1"/>
</dbReference>
<dbReference type="PANTHER" id="PTHR21085:SF0">
    <property type="entry name" value="CHORISMATE SYNTHASE"/>
    <property type="match status" value="1"/>
</dbReference>
<dbReference type="Pfam" id="PF01264">
    <property type="entry name" value="Chorismate_synt"/>
    <property type="match status" value="1"/>
</dbReference>
<dbReference type="PIRSF" id="PIRSF001456">
    <property type="entry name" value="Chorismate_synth"/>
    <property type="match status" value="1"/>
</dbReference>
<dbReference type="SUPFAM" id="SSF103263">
    <property type="entry name" value="Chorismate synthase, AroC"/>
    <property type="match status" value="1"/>
</dbReference>
<dbReference type="PROSITE" id="PS00787">
    <property type="entry name" value="CHORISMATE_SYNTHASE_1"/>
    <property type="match status" value="1"/>
</dbReference>
<dbReference type="PROSITE" id="PS00789">
    <property type="entry name" value="CHORISMATE_SYNTHASE_3"/>
    <property type="match status" value="1"/>
</dbReference>
<evidence type="ECO:0000255" key="1">
    <source>
        <dbReference type="HAMAP-Rule" id="MF_00300"/>
    </source>
</evidence>
<sequence>MPSSWGKIFKVSTFGESHGTSVGVVVEGVPAGIPIRLEEIQKDLNRRRPGQSNLTTPRDETDTVRVVSGVFEGKTIGSPIALIVDNQNTISKDYENLRTTFRPSHADYTYQMKYGFRAHVGGGRSSVRETIGRVAAAAIARMILKDDLGIETIAWVDSIGTVQSNIGDKYPKSREEVDQNEVRCPDVGSADQMRSLILKMKEAGDSVGGTIQCVSYNLPPGLGDPVYDKLDGDLAKAILSIPACKGFEVGSGFSGTLLTGSSHNDEFYVEEGTGRVRTRTNHSGGLQGGISNGEELVIRAAFKPTSTIFKKQNTINLKGEETILEAKGRHDPCVLPRAVPIIEAVVNLVLIDAYLYQRAINPQWFQKWARIPDYYKDLEL</sequence>
<protein>
    <recommendedName>
        <fullName evidence="1">Chorismate synthase</fullName>
        <shortName evidence="1">CS</shortName>
        <ecNumber evidence="1">4.2.3.5</ecNumber>
    </recommendedName>
    <alternativeName>
        <fullName evidence="1">5-enolpyruvylshikimate-3-phosphate phospholyase</fullName>
    </alternativeName>
</protein>
<accession>Q8F9N4</accession>
<name>AROC_LEPIN</name>
<gene>
    <name evidence="1" type="primary">aroC</name>
    <name type="ordered locus">LA_0157</name>
</gene>
<feature type="chain" id="PRO_0000140605" description="Chorismate synthase">
    <location>
        <begin position="1"/>
        <end position="380"/>
    </location>
</feature>
<feature type="binding site" evidence="1">
    <location>
        <position position="47"/>
    </location>
    <ligand>
        <name>NADP(+)</name>
        <dbReference type="ChEBI" id="CHEBI:58349"/>
    </ligand>
</feature>
<feature type="binding site" evidence="1">
    <location>
        <begin position="124"/>
        <end position="126"/>
    </location>
    <ligand>
        <name>FMN</name>
        <dbReference type="ChEBI" id="CHEBI:58210"/>
    </ligand>
</feature>
<feature type="binding site" evidence="1">
    <location>
        <position position="288"/>
    </location>
    <ligand>
        <name>FMN</name>
        <dbReference type="ChEBI" id="CHEBI:58210"/>
    </ligand>
</feature>
<feature type="binding site" evidence="1">
    <location>
        <begin position="303"/>
        <end position="307"/>
    </location>
    <ligand>
        <name>FMN</name>
        <dbReference type="ChEBI" id="CHEBI:58210"/>
    </ligand>
</feature>
<feature type="binding site" evidence="1">
    <location>
        <position position="329"/>
    </location>
    <ligand>
        <name>FMN</name>
        <dbReference type="ChEBI" id="CHEBI:58210"/>
    </ligand>
</feature>
<keyword id="KW-0028">Amino-acid biosynthesis</keyword>
<keyword id="KW-0057">Aromatic amino acid biosynthesis</keyword>
<keyword id="KW-0274">FAD</keyword>
<keyword id="KW-0285">Flavoprotein</keyword>
<keyword id="KW-0288">FMN</keyword>
<keyword id="KW-0456">Lyase</keyword>
<keyword id="KW-0521">NADP</keyword>
<keyword id="KW-1185">Reference proteome</keyword>